<evidence type="ECO:0000255" key="1">
    <source>
        <dbReference type="HAMAP-Rule" id="MF_01031"/>
    </source>
</evidence>
<proteinExistence type="inferred from homology"/>
<feature type="chain" id="PRO_1000063807" description="3-isopropylmalate dehydratase small subunit">
    <location>
        <begin position="1"/>
        <end position="214"/>
    </location>
</feature>
<sequence length="214" mass="24158">MKAFTQHIGLVAPLDRANVDTDQIIPKQFLKSIKRTGFGPNLFDEWRYLDVGQPYQDNSKRPLNQDFVLNHARYQGASVLLARENFGCGSSREHAPWALDEYGFRSVIAPSFADIFFNNSFKNGLLPIILDAAEVDELFKQVEATPGYQLTIDLEAQAVTRPDGKVLKFEIDAFRKHCLLNGLDDIGLTLQDSDAIKAFEGKHRASQPWLFRDA</sequence>
<reference key="1">
    <citation type="journal article" date="2006" name="Nat. Biotechnol.">
        <title>Complete genome sequence of the entomopathogenic and metabolically versatile soil bacterium Pseudomonas entomophila.</title>
        <authorList>
            <person name="Vodovar N."/>
            <person name="Vallenet D."/>
            <person name="Cruveiller S."/>
            <person name="Rouy Z."/>
            <person name="Barbe V."/>
            <person name="Acosta C."/>
            <person name="Cattolico L."/>
            <person name="Jubin C."/>
            <person name="Lajus A."/>
            <person name="Segurens B."/>
            <person name="Vacherie B."/>
            <person name="Wincker P."/>
            <person name="Weissenbach J."/>
            <person name="Lemaitre B."/>
            <person name="Medigue C."/>
            <person name="Boccard F."/>
        </authorList>
    </citation>
    <scope>NUCLEOTIDE SEQUENCE [LARGE SCALE GENOMIC DNA]</scope>
    <source>
        <strain>L48</strain>
    </source>
</reference>
<comment type="function">
    <text evidence="1">Catalyzes the isomerization between 2-isopropylmalate and 3-isopropylmalate, via the formation of 2-isopropylmaleate.</text>
</comment>
<comment type="catalytic activity">
    <reaction evidence="1">
        <text>(2R,3S)-3-isopropylmalate = (2S)-2-isopropylmalate</text>
        <dbReference type="Rhea" id="RHEA:32287"/>
        <dbReference type="ChEBI" id="CHEBI:1178"/>
        <dbReference type="ChEBI" id="CHEBI:35121"/>
        <dbReference type="EC" id="4.2.1.33"/>
    </reaction>
</comment>
<comment type="pathway">
    <text evidence="1">Amino-acid biosynthesis; L-leucine biosynthesis; L-leucine from 3-methyl-2-oxobutanoate: step 2/4.</text>
</comment>
<comment type="subunit">
    <text evidence="1">Heterodimer of LeuC and LeuD.</text>
</comment>
<comment type="similarity">
    <text evidence="1">Belongs to the LeuD family. LeuD type 1 subfamily.</text>
</comment>
<keyword id="KW-0028">Amino-acid biosynthesis</keyword>
<keyword id="KW-0100">Branched-chain amino acid biosynthesis</keyword>
<keyword id="KW-0432">Leucine biosynthesis</keyword>
<keyword id="KW-0456">Lyase</keyword>
<accession>Q1ICV9</accession>
<gene>
    <name evidence="1" type="primary">leuD</name>
    <name type="ordered locus">PSEEN1651</name>
</gene>
<dbReference type="EC" id="4.2.1.33" evidence="1"/>
<dbReference type="EMBL" id="CT573326">
    <property type="protein sequence ID" value="CAK14504.1"/>
    <property type="molecule type" value="Genomic_DNA"/>
</dbReference>
<dbReference type="RefSeq" id="WP_011532914.1">
    <property type="nucleotide sequence ID" value="NC_008027.1"/>
</dbReference>
<dbReference type="SMR" id="Q1ICV9"/>
<dbReference type="STRING" id="384676.PSEEN1651"/>
<dbReference type="GeneID" id="32804895"/>
<dbReference type="KEGG" id="pen:PSEEN1651"/>
<dbReference type="eggNOG" id="COG0066">
    <property type="taxonomic scope" value="Bacteria"/>
</dbReference>
<dbReference type="HOGENOM" id="CLU_081378_0_3_6"/>
<dbReference type="OrthoDB" id="9777465at2"/>
<dbReference type="UniPathway" id="UPA00048">
    <property type="reaction ID" value="UER00071"/>
</dbReference>
<dbReference type="Proteomes" id="UP000000658">
    <property type="component" value="Chromosome"/>
</dbReference>
<dbReference type="GO" id="GO:0009316">
    <property type="term" value="C:3-isopropylmalate dehydratase complex"/>
    <property type="evidence" value="ECO:0007669"/>
    <property type="project" value="InterPro"/>
</dbReference>
<dbReference type="GO" id="GO:0003861">
    <property type="term" value="F:3-isopropylmalate dehydratase activity"/>
    <property type="evidence" value="ECO:0007669"/>
    <property type="project" value="UniProtKB-UniRule"/>
</dbReference>
<dbReference type="GO" id="GO:0009098">
    <property type="term" value="P:L-leucine biosynthetic process"/>
    <property type="evidence" value="ECO:0007669"/>
    <property type="project" value="UniProtKB-UniRule"/>
</dbReference>
<dbReference type="CDD" id="cd01577">
    <property type="entry name" value="IPMI_Swivel"/>
    <property type="match status" value="1"/>
</dbReference>
<dbReference type="FunFam" id="3.20.19.10:FF:000003">
    <property type="entry name" value="3-isopropylmalate dehydratase small subunit"/>
    <property type="match status" value="1"/>
</dbReference>
<dbReference type="Gene3D" id="3.20.19.10">
    <property type="entry name" value="Aconitase, domain 4"/>
    <property type="match status" value="1"/>
</dbReference>
<dbReference type="HAMAP" id="MF_01031">
    <property type="entry name" value="LeuD_type1"/>
    <property type="match status" value="1"/>
</dbReference>
<dbReference type="InterPro" id="IPR004431">
    <property type="entry name" value="3-IsopropMal_deHydase_ssu"/>
</dbReference>
<dbReference type="InterPro" id="IPR015928">
    <property type="entry name" value="Aconitase/3IPM_dehydase_swvl"/>
</dbReference>
<dbReference type="InterPro" id="IPR000573">
    <property type="entry name" value="AconitaseA/IPMdHydase_ssu_swvl"/>
</dbReference>
<dbReference type="InterPro" id="IPR033940">
    <property type="entry name" value="IPMI_Swivel"/>
</dbReference>
<dbReference type="InterPro" id="IPR050075">
    <property type="entry name" value="LeuD"/>
</dbReference>
<dbReference type="NCBIfam" id="TIGR00171">
    <property type="entry name" value="leuD"/>
    <property type="match status" value="1"/>
</dbReference>
<dbReference type="NCBIfam" id="NF002458">
    <property type="entry name" value="PRK01641.1"/>
    <property type="match status" value="1"/>
</dbReference>
<dbReference type="PANTHER" id="PTHR43345:SF5">
    <property type="entry name" value="3-ISOPROPYLMALATE DEHYDRATASE SMALL SUBUNIT"/>
    <property type="match status" value="1"/>
</dbReference>
<dbReference type="PANTHER" id="PTHR43345">
    <property type="entry name" value="3-ISOPROPYLMALATE DEHYDRATASE SMALL SUBUNIT 2-RELATED-RELATED"/>
    <property type="match status" value="1"/>
</dbReference>
<dbReference type="Pfam" id="PF00694">
    <property type="entry name" value="Aconitase_C"/>
    <property type="match status" value="1"/>
</dbReference>
<dbReference type="SUPFAM" id="SSF52016">
    <property type="entry name" value="LeuD/IlvD-like"/>
    <property type="match status" value="1"/>
</dbReference>
<organism>
    <name type="scientific">Pseudomonas entomophila (strain L48)</name>
    <dbReference type="NCBI Taxonomy" id="384676"/>
    <lineage>
        <taxon>Bacteria</taxon>
        <taxon>Pseudomonadati</taxon>
        <taxon>Pseudomonadota</taxon>
        <taxon>Gammaproteobacteria</taxon>
        <taxon>Pseudomonadales</taxon>
        <taxon>Pseudomonadaceae</taxon>
        <taxon>Pseudomonas</taxon>
    </lineage>
</organism>
<protein>
    <recommendedName>
        <fullName evidence="1">3-isopropylmalate dehydratase small subunit</fullName>
        <ecNumber evidence="1">4.2.1.33</ecNumber>
    </recommendedName>
    <alternativeName>
        <fullName evidence="1">Alpha-IPM isomerase</fullName>
        <shortName evidence="1">IPMI</shortName>
    </alternativeName>
    <alternativeName>
        <fullName evidence="1">Isopropylmalate isomerase</fullName>
    </alternativeName>
</protein>
<name>LEUD_PSEE4</name>